<name>OTX1_HUMAN</name>
<comment type="function">
    <text>Probably plays a role in the development of the brain and the sense organs. Can bind to the BCD target sequence (BTS): 5'-TCTAATCCC-3'.</text>
</comment>
<comment type="interaction">
    <interactant intactId="EBI-740446">
        <id>P32242</id>
    </interactant>
    <interactant intactId="EBI-12006944">
        <id>O43184-4</id>
        <label>ADAM12</label>
    </interactant>
    <organismsDiffer>false</organismsDiffer>
    <experiments>3</experiments>
</comment>
<comment type="interaction">
    <interactant intactId="EBI-740446">
        <id>P32242</id>
    </interactant>
    <interactant intactId="EBI-10173507">
        <id>Q6UY14-3</id>
        <label>ADAMTSL4</label>
    </interactant>
    <organismsDiffer>false</organismsDiffer>
    <experiments>3</experiments>
</comment>
<comment type="interaction">
    <interactant intactId="EBI-740446">
        <id>P32242</id>
    </interactant>
    <interactant intactId="EBI-1211484">
        <id>P05187</id>
        <label>ALPP</label>
    </interactant>
    <organismsDiffer>false</organismsDiffer>
    <experiments>3</experiments>
</comment>
<comment type="interaction">
    <interactant intactId="EBI-740446">
        <id>P32242</id>
    </interactant>
    <interactant intactId="EBI-12102070">
        <id>Q9NXR5-2</id>
        <label>ANKRD10</label>
    </interactant>
    <organismsDiffer>false</organismsDiffer>
    <experiments>3</experiments>
</comment>
<comment type="interaction">
    <interactant intactId="EBI-740446">
        <id>P32242</id>
    </interactant>
    <interactant intactId="EBI-7543347">
        <id>Q96PE2</id>
        <label>ARHGEF17</label>
    </interactant>
    <organismsDiffer>false</organismsDiffer>
    <experiments>3</experiments>
</comment>
<comment type="interaction">
    <interactant intactId="EBI-740446">
        <id>P32242</id>
    </interactant>
    <interactant intactId="EBI-948603">
        <id>Q03989</id>
        <label>ARID5A</label>
    </interactant>
    <organismsDiffer>false</organismsDiffer>
    <experiments>3</experiments>
</comment>
<comment type="interaction">
    <interactant intactId="EBI-740446">
        <id>P32242</id>
    </interactant>
    <interactant intactId="EBI-12837280">
        <id>Q674R7-2</id>
        <label>ATG9B</label>
    </interactant>
    <organismsDiffer>false</organismsDiffer>
    <experiments>3</experiments>
</comment>
<comment type="interaction">
    <interactant intactId="EBI-740446">
        <id>P32242</id>
    </interactant>
    <interactant intactId="EBI-12809220">
        <id>Q5SWW7</id>
        <label>C10orf55</label>
    </interactant>
    <organismsDiffer>false</organismsDiffer>
    <experiments>3</experiments>
</comment>
<comment type="interaction">
    <interactant intactId="EBI-740446">
        <id>P32242</id>
    </interactant>
    <interactant intactId="EBI-1050638">
        <id>O95388</id>
        <label>CCN4</label>
    </interactant>
    <organismsDiffer>false</organismsDiffer>
    <experiments>3</experiments>
</comment>
<comment type="interaction">
    <interactant intactId="EBI-740446">
        <id>P32242</id>
    </interactant>
    <interactant intactId="EBI-12261896">
        <id>Q5T4B2</id>
        <label>CERCAM</label>
    </interactant>
    <organismsDiffer>false</organismsDiffer>
    <experiments>3</experiments>
</comment>
<comment type="interaction">
    <interactant intactId="EBI-740446">
        <id>P32242</id>
    </interactant>
    <interactant intactId="EBI-718615">
        <id>Q9H5F2</id>
        <label>CFAP68</label>
    </interactant>
    <organismsDiffer>false</organismsDiffer>
    <experiments>3</experiments>
</comment>
<comment type="interaction">
    <interactant intactId="EBI-740446">
        <id>P32242</id>
    </interactant>
    <interactant intactId="EBI-12820943">
        <id>O95992</id>
        <label>CH25H</label>
    </interactant>
    <organismsDiffer>false</organismsDiffer>
    <experiments>3</experiments>
</comment>
<comment type="interaction">
    <interactant intactId="EBI-740446">
        <id>P32242</id>
    </interactant>
    <interactant intactId="EBI-741528">
        <id>Q9UKJ5</id>
        <label>CHIC2</label>
    </interactant>
    <organismsDiffer>false</organismsDiffer>
    <experiments>4</experiments>
</comment>
<comment type="interaction">
    <interactant intactId="EBI-740446">
        <id>P32242</id>
    </interactant>
    <interactant intactId="EBI-947551">
        <id>Q9H2X0</id>
        <label>CHRD</label>
    </interactant>
    <organismsDiffer>false</organismsDiffer>
    <experiments>3</experiments>
</comment>
<comment type="interaction">
    <interactant intactId="EBI-740446">
        <id>P32242</id>
    </interactant>
    <interactant intactId="EBI-12593838">
        <id>Q6WN34-2</id>
        <label>CHRDL2</label>
    </interactant>
    <organismsDiffer>false</organismsDiffer>
    <experiments>3</experiments>
</comment>
<comment type="interaction">
    <interactant intactId="EBI-740446">
        <id>P32242</id>
    </interactant>
    <interactant intactId="EBI-747133">
        <id>P27658</id>
        <label>COL8A1</label>
    </interactant>
    <organismsDiffer>false</organismsDiffer>
    <experiments>3</experiments>
</comment>
<comment type="interaction">
    <interactant intactId="EBI-740446">
        <id>P32242</id>
    </interactant>
    <interactant intactId="EBI-2531022">
        <id>P49747</id>
        <label>COMP</label>
    </interactant>
    <organismsDiffer>false</organismsDiffer>
    <experiments>7</experiments>
</comment>
<comment type="interaction">
    <interactant intactId="EBI-740446">
        <id>P32242</id>
    </interactant>
    <interactant intactId="EBI-6269566">
        <id>P23786</id>
        <label>CPT2</label>
    </interactant>
    <organismsDiffer>false</organismsDiffer>
    <experiments>3</experiments>
</comment>
<comment type="interaction">
    <interactant intactId="EBI-740446">
        <id>P32242</id>
    </interactant>
    <interactant intactId="EBI-12265122">
        <id>O75638-2</id>
        <label>CTAG2</label>
    </interactant>
    <organismsDiffer>false</organismsDiffer>
    <experiments>3</experiments>
</comment>
<comment type="interaction">
    <interactant intactId="EBI-740446">
        <id>P32242</id>
    </interactant>
    <interactant intactId="EBI-3867333">
        <id>A8MQ03</id>
        <label>CYSRT1</label>
    </interactant>
    <organismsDiffer>false</organismsDiffer>
    <experiments>3</experiments>
</comment>
<comment type="interaction">
    <interactant intactId="EBI-740446">
        <id>P32242</id>
    </interactant>
    <interactant intactId="EBI-923653">
        <id>Q9Y6K1</id>
        <label>DNMT3A</label>
    </interactant>
    <organismsDiffer>false</organismsDiffer>
    <experiments>3</experiments>
</comment>
<comment type="interaction">
    <interactant intactId="EBI-740446">
        <id>P32242</id>
    </interactant>
    <interactant intactId="EBI-536772">
        <id>Q12805</id>
        <label>EFEMP1</label>
    </interactant>
    <organismsDiffer>false</organismsDiffer>
    <experiments>3</experiments>
</comment>
<comment type="interaction">
    <interactant intactId="EBI-740446">
        <id>P32242</id>
    </interactant>
    <interactant intactId="EBI-743414">
        <id>O95967</id>
        <label>EFEMP2</label>
    </interactant>
    <organismsDiffer>false</organismsDiffer>
    <experiments>3</experiments>
</comment>
<comment type="interaction">
    <interactant intactId="EBI-740446">
        <id>P32242</id>
    </interactant>
    <interactant intactId="EBI-2870454">
        <id>Q16134</id>
        <label>ETFDH</label>
    </interactant>
    <organismsDiffer>false</organismsDiffer>
    <experiments>3</experiments>
</comment>
<comment type="interaction">
    <interactant intactId="EBI-740446">
        <id>P32242</id>
    </interactant>
    <interactant intactId="EBI-12193763">
        <id>A1KXE4-2</id>
        <label>FAM168B</label>
    </interactant>
    <organismsDiffer>false</organismsDiffer>
    <experiments>3</experiments>
</comment>
<comment type="interaction">
    <interactant intactId="EBI-740446">
        <id>P32242</id>
    </interactant>
    <interactant intactId="EBI-12886238">
        <id>Q86X60-2</id>
        <label>FAM72B</label>
    </interactant>
    <organismsDiffer>false</organismsDiffer>
    <experiments>3</experiments>
</comment>
<comment type="interaction">
    <interactant intactId="EBI-740446">
        <id>P32242</id>
    </interactant>
    <interactant intactId="EBI-947973">
        <id>P98095</id>
        <label>FBLN2</label>
    </interactant>
    <organismsDiffer>false</organismsDiffer>
    <experiments>3</experiments>
</comment>
<comment type="interaction">
    <interactant intactId="EBI-740446">
        <id>P32242</id>
    </interactant>
    <interactant intactId="EBI-947897">
        <id>Q9UBX5</id>
        <label>FBLN5</label>
    </interactant>
    <organismsDiffer>false</organismsDiffer>
    <experiments>3</experiments>
</comment>
<comment type="interaction">
    <interactant intactId="EBI-740446">
        <id>P32242</id>
    </interactant>
    <interactant intactId="EBI-750641">
        <id>Q5TD97</id>
        <label>FHL5</label>
    </interactant>
    <organismsDiffer>false</organismsDiffer>
    <experiments>3</experiments>
</comment>
<comment type="interaction">
    <interactant intactId="EBI-740446">
        <id>P32242</id>
    </interactant>
    <interactant intactId="EBI-11519926">
        <id>Q6PI77</id>
        <label>GPRASP3</label>
    </interactant>
    <organismsDiffer>false</organismsDiffer>
    <experiments>3</experiments>
</comment>
<comment type="interaction">
    <interactant intactId="EBI-740446">
        <id>P32242</id>
    </interactant>
    <interactant intactId="EBI-747754">
        <id>P28799</id>
        <label>GRN</label>
    </interactant>
    <organismsDiffer>false</organismsDiffer>
    <experiments>10</experiments>
</comment>
<comment type="interaction">
    <interactant intactId="EBI-740446">
        <id>P32242</id>
    </interactant>
    <interactant intactId="EBI-748258">
        <id>Q5TA45</id>
        <label>INTS11</label>
    </interactant>
    <organismsDiffer>false</organismsDiffer>
    <experiments>3</experiments>
</comment>
<comment type="interaction">
    <interactant intactId="EBI-740446">
        <id>P32242</id>
    </interactant>
    <interactant intactId="EBI-1055254">
        <id>Q8WXH2</id>
        <label>JPH3</label>
    </interactant>
    <organismsDiffer>false</organismsDiffer>
    <experiments>3</experiments>
</comment>
<comment type="interaction">
    <interactant intactId="EBI-740446">
        <id>P32242</id>
    </interactant>
    <interactant intactId="EBI-10294109">
        <id>Q96T55</id>
        <label>KCNK16</label>
    </interactant>
    <organismsDiffer>false</organismsDiffer>
    <experiments>3</experiments>
</comment>
<comment type="interaction">
    <interactant intactId="EBI-740446">
        <id>P32242</id>
    </interactant>
    <interactant intactId="EBI-724915">
        <id>Q53HC5</id>
        <label>KLHL26</label>
    </interactant>
    <organismsDiffer>false</organismsDiffer>
    <experiments>3</experiments>
</comment>
<comment type="interaction">
    <interactant intactId="EBI-740446">
        <id>P32242</id>
    </interactant>
    <interactant intactId="EBI-10981970">
        <id>Q5T749</id>
        <label>KPRP</label>
    </interactant>
    <organismsDiffer>false</organismsDiffer>
    <experiments>6</experiments>
</comment>
<comment type="interaction">
    <interactant intactId="EBI-740446">
        <id>P32242</id>
    </interactant>
    <interactant intactId="EBI-948001">
        <id>Q15323</id>
        <label>KRT31</label>
    </interactant>
    <organismsDiffer>false</organismsDiffer>
    <experiments>3</experiments>
</comment>
<comment type="interaction">
    <interactant intactId="EBI-740446">
        <id>P32242</id>
    </interactant>
    <interactant intactId="EBI-1058674">
        <id>Q92764</id>
        <label>KRT35</label>
    </interactant>
    <organismsDiffer>false</organismsDiffer>
    <experiments>3</experiments>
</comment>
<comment type="interaction">
    <interactant intactId="EBI-740446">
        <id>P32242</id>
    </interactant>
    <interactant intactId="EBI-1045716">
        <id>O76014</id>
        <label>KRT37</label>
    </interactant>
    <organismsDiffer>false</organismsDiffer>
    <experiments>3</experiments>
</comment>
<comment type="interaction">
    <interactant intactId="EBI-740446">
        <id>P32242</id>
    </interactant>
    <interactant intactId="EBI-739648">
        <id>Q14533</id>
        <label>KRT81</label>
    </interactant>
    <organismsDiffer>false</organismsDiffer>
    <experiments>8</experiments>
</comment>
<comment type="interaction">
    <interactant intactId="EBI-740446">
        <id>P32242</id>
    </interactant>
    <interactant intactId="EBI-10221390">
        <id>P78385</id>
        <label>KRT83</label>
    </interactant>
    <organismsDiffer>false</organismsDiffer>
    <experiments>3</experiments>
</comment>
<comment type="interaction">
    <interactant intactId="EBI-740446">
        <id>P32242</id>
    </interactant>
    <interactant intactId="EBI-1049371">
        <id>P78386</id>
        <label>KRT85</label>
    </interactant>
    <organismsDiffer>false</organismsDiffer>
    <experiments>3</experiments>
</comment>
<comment type="interaction">
    <interactant intactId="EBI-740446">
        <id>P32242</id>
    </interactant>
    <interactant intactId="EBI-11959885">
        <id>Q07627</id>
        <label>KRTAP1-1</label>
    </interactant>
    <organismsDiffer>false</organismsDiffer>
    <experiments>3</experiments>
</comment>
<comment type="interaction">
    <interactant intactId="EBI-740446">
        <id>P32242</id>
    </interactant>
    <interactant intactId="EBI-11749135">
        <id>Q8IUG1</id>
        <label>KRTAP1-3</label>
    </interactant>
    <organismsDiffer>false</organismsDiffer>
    <experiments>7</experiments>
</comment>
<comment type="interaction">
    <interactant intactId="EBI-740446">
        <id>P32242</id>
    </interactant>
    <interactant intactId="EBI-11741292">
        <id>Q9BYS1</id>
        <label>KRTAP1-5</label>
    </interactant>
    <organismsDiffer>false</organismsDiffer>
    <experiments>5</experiments>
</comment>
<comment type="interaction">
    <interactant intactId="EBI-740446">
        <id>P32242</id>
    </interactant>
    <interactant intactId="EBI-10217483">
        <id>P60412</id>
        <label>KRTAP10-11</label>
    </interactant>
    <organismsDiffer>false</organismsDiffer>
    <experiments>6</experiments>
</comment>
<comment type="interaction">
    <interactant intactId="EBI-740446">
        <id>P32242</id>
    </interactant>
    <interactant intactId="EBI-10172150">
        <id>P60370</id>
        <label>KRTAP10-5</label>
    </interactant>
    <organismsDiffer>false</organismsDiffer>
    <experiments>6</experiments>
</comment>
<comment type="interaction">
    <interactant intactId="EBI-740446">
        <id>P32242</id>
    </interactant>
    <interactant intactId="EBI-10172290">
        <id>P60409</id>
        <label>KRTAP10-7</label>
    </interactant>
    <organismsDiffer>false</organismsDiffer>
    <experiments>5</experiments>
</comment>
<comment type="interaction">
    <interactant intactId="EBI-740446">
        <id>P32242</id>
    </interactant>
    <interactant intactId="EBI-10171774">
        <id>P60410</id>
        <label>KRTAP10-8</label>
    </interactant>
    <organismsDiffer>false</organismsDiffer>
    <experiments>8</experiments>
</comment>
<comment type="interaction">
    <interactant intactId="EBI-740446">
        <id>P32242</id>
    </interactant>
    <interactant intactId="EBI-10172052">
        <id>P60411</id>
        <label>KRTAP10-9</label>
    </interactant>
    <organismsDiffer>false</organismsDiffer>
    <experiments>9</experiments>
</comment>
<comment type="interaction">
    <interactant intactId="EBI-740446">
        <id>P32242</id>
    </interactant>
    <interactant intactId="EBI-1052037">
        <id>Q8IUC1</id>
        <label>KRTAP11-1</label>
    </interactant>
    <organismsDiffer>false</organismsDiffer>
    <experiments>5</experiments>
</comment>
<comment type="interaction">
    <interactant intactId="EBI-740446">
        <id>P32242</id>
    </interactant>
    <interactant intactId="EBI-10210845">
        <id>P59990</id>
        <label>KRTAP12-1</label>
    </interactant>
    <organismsDiffer>false</organismsDiffer>
    <experiments>3</experiments>
</comment>
<comment type="interaction">
    <interactant intactId="EBI-740446">
        <id>P32242</id>
    </interactant>
    <interactant intactId="EBI-10176379">
        <id>P59991</id>
        <label>KRTAP12-2</label>
    </interactant>
    <organismsDiffer>false</organismsDiffer>
    <experiments>6</experiments>
</comment>
<comment type="interaction">
    <interactant intactId="EBI-740446">
        <id>P32242</id>
    </interactant>
    <interactant intactId="EBI-11953334">
        <id>P60328</id>
        <label>KRTAP12-3</label>
    </interactant>
    <organismsDiffer>false</organismsDiffer>
    <experiments>3</experiments>
</comment>
<comment type="interaction">
    <interactant intactId="EBI-740446">
        <id>P32242</id>
    </interactant>
    <interactant intactId="EBI-10176396">
        <id>P60329</id>
        <label>KRTAP12-4</label>
    </interactant>
    <organismsDiffer>false</organismsDiffer>
    <experiments>6</experiments>
</comment>
<comment type="interaction">
    <interactant intactId="EBI-740446">
        <id>P32242</id>
    </interactant>
    <interactant intactId="EBI-11953846">
        <id>Q52LG2</id>
        <label>KRTAP13-2</label>
    </interactant>
    <organismsDiffer>false</organismsDiffer>
    <experiments>3</experiments>
</comment>
<comment type="interaction">
    <interactant intactId="EBI-740446">
        <id>P32242</id>
    </interactant>
    <interactant intactId="EBI-10241252">
        <id>Q3SY46</id>
        <label>KRTAP13-3</label>
    </interactant>
    <organismsDiffer>false</organismsDiffer>
    <experiments>3</experiments>
</comment>
<comment type="interaction">
    <interactant intactId="EBI-740446">
        <id>P32242</id>
    </interactant>
    <interactant intactId="EBI-11992140">
        <id>Q3LI76</id>
        <label>KRTAP15-1</label>
    </interactant>
    <organismsDiffer>false</organismsDiffer>
    <experiments>3</experiments>
</comment>
<comment type="interaction">
    <interactant intactId="EBI-740446">
        <id>P32242</id>
    </interactant>
    <interactant intactId="EBI-11988175">
        <id>Q9BYP8</id>
        <label>KRTAP17-1</label>
    </interactant>
    <organismsDiffer>false</organismsDiffer>
    <experiments>3</experiments>
</comment>
<comment type="interaction">
    <interactant intactId="EBI-740446">
        <id>P32242</id>
    </interactant>
    <interactant intactId="EBI-12196745">
        <id>Q3LHN2</id>
        <label>KRTAP19-2</label>
    </interactant>
    <organismsDiffer>false</organismsDiffer>
    <experiments>5</experiments>
</comment>
<comment type="interaction">
    <interactant intactId="EBI-740446">
        <id>P32242</id>
    </interactant>
    <interactant intactId="EBI-10241353">
        <id>Q3SYF9</id>
        <label>KRTAP19-7</label>
    </interactant>
    <organismsDiffer>false</organismsDiffer>
    <experiments>3</experiments>
</comment>
<comment type="interaction">
    <interactant intactId="EBI-740446">
        <id>P32242</id>
    </interactant>
    <interactant intactId="EBI-14065470">
        <id>Q9BYR9</id>
        <label>KRTAP2-4</label>
    </interactant>
    <organismsDiffer>false</organismsDiffer>
    <experiments>3</experiments>
</comment>
<comment type="interaction">
    <interactant intactId="EBI-740446">
        <id>P32242</id>
    </interactant>
    <interactant intactId="EBI-3957672">
        <id>Q6PEX3</id>
        <label>KRTAP26-1</label>
    </interactant>
    <organismsDiffer>false</organismsDiffer>
    <experiments>3</experiments>
</comment>
<comment type="interaction">
    <interactant intactId="EBI-740446">
        <id>P32242</id>
    </interactant>
    <interactant intactId="EBI-9996449">
        <id>Q9BYR8</id>
        <label>KRTAP3-1</label>
    </interactant>
    <organismsDiffer>false</organismsDiffer>
    <experiments>3</experiments>
</comment>
<comment type="interaction">
    <interactant intactId="EBI-740446">
        <id>P32242</id>
    </interactant>
    <interactant intactId="EBI-751260">
        <id>Q9BYR7</id>
        <label>KRTAP3-2</label>
    </interactant>
    <organismsDiffer>false</organismsDiffer>
    <experiments>9</experiments>
</comment>
<comment type="interaction">
    <interactant intactId="EBI-740446">
        <id>P32242</id>
    </interactant>
    <interactant intactId="EBI-3957694">
        <id>Q9BYR6</id>
        <label>KRTAP3-3</label>
    </interactant>
    <organismsDiffer>false</organismsDiffer>
    <experiments>6</experiments>
</comment>
<comment type="interaction">
    <interactant intactId="EBI-740446">
        <id>P32242</id>
    </interactant>
    <interactant intactId="EBI-34579671">
        <id>Q9BYQ7</id>
        <label>KRTAP4-1</label>
    </interactant>
    <organismsDiffer>false</organismsDiffer>
    <experiments>3</experiments>
</comment>
<comment type="interaction">
    <interactant intactId="EBI-740446">
        <id>P32242</id>
    </interactant>
    <interactant intactId="EBI-10302392">
        <id>Q9BYQ6</id>
        <label>KRTAP4-11</label>
    </interactant>
    <organismsDiffer>false</organismsDiffer>
    <experiments>6</experiments>
</comment>
<comment type="interaction">
    <interactant intactId="EBI-740446">
        <id>P32242</id>
    </interactant>
    <interactant intactId="EBI-739863">
        <id>Q9BQ66</id>
        <label>KRTAP4-12</label>
    </interactant>
    <organismsDiffer>false</organismsDiffer>
    <experiments>7</experiments>
</comment>
<comment type="interaction">
    <interactant intactId="EBI-740446">
        <id>P32242</id>
    </interactant>
    <interactant intactId="EBI-10172511">
        <id>Q9BYR5</id>
        <label>KRTAP4-2</label>
    </interactant>
    <organismsDiffer>false</organismsDiffer>
    <experiments>3</experiments>
</comment>
<comment type="interaction">
    <interactant intactId="EBI-740446">
        <id>P32242</id>
    </interactant>
    <interactant intactId="EBI-11958132">
        <id>Q9BYR3</id>
        <label>KRTAP4-4</label>
    </interactant>
    <organismsDiffer>false</organismsDiffer>
    <experiments>3</experiments>
</comment>
<comment type="interaction">
    <interactant intactId="EBI-740446">
        <id>P32242</id>
    </interactant>
    <interactant intactId="EBI-11993254">
        <id>Q9BYR2</id>
        <label>KRTAP4-5</label>
    </interactant>
    <organismsDiffer>false</organismsDiffer>
    <experiments>3</experiments>
</comment>
<comment type="interaction">
    <interactant intactId="EBI-740446">
        <id>P32242</id>
    </interactant>
    <interactant intactId="EBI-10302547">
        <id>Q9BYR0</id>
        <label>KRTAP4-7</label>
    </interactant>
    <organismsDiffer>false</organismsDiffer>
    <experiments>3</experiments>
</comment>
<comment type="interaction">
    <interactant intactId="EBI-740446">
        <id>P32242</id>
    </interactant>
    <interactant intactId="EBI-11993296">
        <id>Q6L8G4</id>
        <label>KRTAP5-11</label>
    </interactant>
    <organismsDiffer>false</organismsDiffer>
    <experiments>3</experiments>
</comment>
<comment type="interaction">
    <interactant intactId="EBI-740446">
        <id>P32242</id>
    </interactant>
    <interactant intactId="EBI-11974251">
        <id>Q6L8H2</id>
        <label>KRTAP5-3</label>
    </interactant>
    <organismsDiffer>false</organismsDiffer>
    <experiments>3</experiments>
</comment>
<comment type="interaction">
    <interactant intactId="EBI-740446">
        <id>P32242</id>
    </interactant>
    <interactant intactId="EBI-11963072">
        <id>Q6L8H1</id>
        <label>KRTAP5-4</label>
    </interactant>
    <organismsDiffer>false</organismsDiffer>
    <experiments>3</experiments>
</comment>
<comment type="interaction">
    <interactant intactId="EBI-740446">
        <id>P32242</id>
    </interactant>
    <interactant intactId="EBI-10250562">
        <id>Q6L8G9</id>
        <label>KRTAP5-6</label>
    </interactant>
    <organismsDiffer>false</organismsDiffer>
    <experiments>6</experiments>
</comment>
<comment type="interaction">
    <interactant intactId="EBI-740446">
        <id>P32242</id>
    </interactant>
    <interactant intactId="EBI-3958099">
        <id>P26371</id>
        <label>KRTAP5-9</label>
    </interactant>
    <organismsDiffer>false</organismsDiffer>
    <experiments>8</experiments>
</comment>
<comment type="interaction">
    <interactant intactId="EBI-740446">
        <id>P32242</id>
    </interactant>
    <interactant intactId="EBI-12111050">
        <id>Q3LI64</id>
        <label>KRTAP6-1</label>
    </interactant>
    <organismsDiffer>false</organismsDiffer>
    <experiments>3</experiments>
</comment>
<comment type="interaction">
    <interactant intactId="EBI-740446">
        <id>P32242</id>
    </interactant>
    <interactant intactId="EBI-11962084">
        <id>Q3LI66</id>
        <label>KRTAP6-2</label>
    </interactant>
    <organismsDiffer>false</organismsDiffer>
    <experiments>3</experiments>
</comment>
<comment type="interaction">
    <interactant intactId="EBI-740446">
        <id>P32242</id>
    </interactant>
    <interactant intactId="EBI-22311199">
        <id>Q3LI67</id>
        <label>KRTAP6-3</label>
    </interactant>
    <organismsDiffer>false</organismsDiffer>
    <experiments>3</experiments>
</comment>
<comment type="interaction">
    <interactant intactId="EBI-740446">
        <id>P32242</id>
    </interactant>
    <interactant intactId="EBI-18394498">
        <id>Q8IUC3</id>
        <label>KRTAP7-1</label>
    </interactant>
    <organismsDiffer>false</organismsDiffer>
    <experiments>3</experiments>
</comment>
<comment type="interaction">
    <interactant intactId="EBI-740446">
        <id>P32242</id>
    </interactant>
    <interactant intactId="EBI-1044640">
        <id>Q9BYQ4</id>
        <label>KRTAP9-2</label>
    </interactant>
    <organismsDiffer>false</organismsDiffer>
    <experiments>10</experiments>
</comment>
<comment type="interaction">
    <interactant intactId="EBI-740446">
        <id>P32242</id>
    </interactant>
    <interactant intactId="EBI-1043191">
        <id>Q9BYQ3</id>
        <label>KRTAP9-3</label>
    </interactant>
    <organismsDiffer>false</organismsDiffer>
    <experiments>3</experiments>
</comment>
<comment type="interaction">
    <interactant intactId="EBI-740446">
        <id>P32242</id>
    </interactant>
    <interactant intactId="EBI-10185730">
        <id>Q9BYQ2</id>
        <label>KRTAP9-4</label>
    </interactant>
    <organismsDiffer>false</organismsDiffer>
    <experiments>5</experiments>
</comment>
<comment type="interaction">
    <interactant intactId="EBI-740446">
        <id>P32242</id>
    </interactant>
    <interactant intactId="EBI-11958364">
        <id>Q9BYQ0</id>
        <label>KRTAP9-8</label>
    </interactant>
    <organismsDiffer>false</organismsDiffer>
    <experiments>3</experiments>
</comment>
<comment type="interaction">
    <interactant intactId="EBI-740446">
        <id>P32242</id>
    </interactant>
    <interactant intactId="EBI-9088686">
        <id>Q14847-2</id>
        <label>LASP1</label>
    </interactant>
    <organismsDiffer>false</organismsDiffer>
    <experiments>3</experiments>
</comment>
<comment type="interaction">
    <interactant intactId="EBI-740446">
        <id>P32242</id>
    </interactant>
    <interactant intactId="EBI-10245913">
        <id>Q5T7P3</id>
        <label>LCE1B</label>
    </interactant>
    <organismsDiffer>false</organismsDiffer>
    <experiments>5</experiments>
</comment>
<comment type="interaction">
    <interactant intactId="EBI-740446">
        <id>P32242</id>
    </interactant>
    <interactant intactId="EBI-12224199">
        <id>Q5T751</id>
        <label>LCE1C</label>
    </interactant>
    <organismsDiffer>false</organismsDiffer>
    <experiments>3</experiments>
</comment>
<comment type="interaction">
    <interactant intactId="EBI-740446">
        <id>P32242</id>
    </interactant>
    <interactant intactId="EBI-11958008">
        <id>Q5T754</id>
        <label>LCE1F</label>
    </interactant>
    <organismsDiffer>false</organismsDiffer>
    <experiments>3</experiments>
</comment>
<comment type="interaction">
    <interactant intactId="EBI-740446">
        <id>P32242</id>
    </interactant>
    <interactant intactId="EBI-10246607">
        <id>Q5TA79</id>
        <label>LCE2A</label>
    </interactant>
    <organismsDiffer>false</organismsDiffer>
    <experiments>3</experiments>
</comment>
<comment type="interaction">
    <interactant intactId="EBI-740446">
        <id>P32242</id>
    </interactant>
    <interactant intactId="EBI-11478468">
        <id>O14633</id>
        <label>LCE2B</label>
    </interactant>
    <organismsDiffer>false</organismsDiffer>
    <experiments>3</experiments>
</comment>
<comment type="interaction">
    <interactant intactId="EBI-740446">
        <id>P32242</id>
    </interactant>
    <interactant intactId="EBI-11973993">
        <id>Q5TA81</id>
        <label>LCE2C</label>
    </interactant>
    <organismsDiffer>false</organismsDiffer>
    <experiments>3</experiments>
</comment>
<comment type="interaction">
    <interactant intactId="EBI-740446">
        <id>P32242</id>
    </interactant>
    <interactant intactId="EBI-10246750">
        <id>Q5TA82</id>
        <label>LCE2D</label>
    </interactant>
    <organismsDiffer>false</organismsDiffer>
    <experiments>6</experiments>
</comment>
<comment type="interaction">
    <interactant intactId="EBI-740446">
        <id>P32242</id>
    </interactant>
    <interactant intactId="EBI-10246358">
        <id>Q5TA78</id>
        <label>LCE4A</label>
    </interactant>
    <organismsDiffer>false</organismsDiffer>
    <experiments>3</experiments>
</comment>
<comment type="interaction">
    <interactant intactId="EBI-740446">
        <id>P32242</id>
    </interactant>
    <interactant intactId="EBI-3957707">
        <id>Q9UHV8</id>
        <label>LGALS13</label>
    </interactant>
    <organismsDiffer>false</organismsDiffer>
    <experiments>3</experiments>
</comment>
<comment type="interaction">
    <interactant intactId="EBI-740446">
        <id>P32242</id>
    </interactant>
    <interactant intactId="EBI-748182">
        <id>Q8TC57</id>
        <label>M1AP</label>
    </interactant>
    <organismsDiffer>false</organismsDiffer>
    <experiments>3</experiments>
</comment>
<comment type="interaction">
    <interactant intactId="EBI-740446">
        <id>P32242</id>
    </interactant>
    <interactant intactId="EBI-724076">
        <id>Q99750</id>
        <label>MDFI</label>
    </interactant>
    <organismsDiffer>false</organismsDiffer>
    <experiments>9</experiments>
</comment>
<comment type="interaction">
    <interactant intactId="EBI-740446">
        <id>P32242</id>
    </interactant>
    <interactant intactId="EBI-2801965">
        <id>Q5JXC2</id>
        <label>MIIP</label>
    </interactant>
    <organismsDiffer>false</organismsDiffer>
    <experiments>3</experiments>
</comment>
<comment type="interaction">
    <interactant intactId="EBI-740446">
        <id>P32242</id>
    </interactant>
    <interactant intactId="EBI-12957691">
        <id>Q330K2-3</id>
        <label>NDUFAF6</label>
    </interactant>
    <organismsDiffer>false</organismsDiffer>
    <experiments>3</experiments>
</comment>
<comment type="interaction">
    <interactant intactId="EBI-740446">
        <id>P32242</id>
    </interactant>
    <interactant intactId="EBI-713665">
        <id>P19404</id>
        <label>NDUFV2</label>
    </interactant>
    <organismsDiffer>false</organismsDiffer>
    <experiments>3</experiments>
</comment>
<comment type="interaction">
    <interactant intactId="EBI-740446">
        <id>P32242</id>
    </interactant>
    <interactant intactId="EBI-12106440">
        <id>Q9NQS3-2</id>
        <label>NECTIN3</label>
    </interactant>
    <organismsDiffer>false</organismsDiffer>
    <experiments>3</experiments>
</comment>
<comment type="interaction">
    <interactant intactId="EBI-740446">
        <id>P32242</id>
    </interactant>
    <interactant intactId="EBI-12868744">
        <id>P0CG21</id>
        <label>NHLRC4</label>
    </interactant>
    <organismsDiffer>false</organismsDiffer>
    <experiments>3</experiments>
</comment>
<comment type="interaction">
    <interactant intactId="EBI-740446">
        <id>P32242</id>
    </interactant>
    <interactant intactId="EBI-22310682">
        <id>P0DPK4</id>
        <label>NOTCH2NLC</label>
    </interactant>
    <organismsDiffer>false</organismsDiffer>
    <experiments>3</experiments>
</comment>
<comment type="interaction">
    <interactant intactId="EBI-740446">
        <id>P32242</id>
    </interactant>
    <interactant intactId="EBI-12027160">
        <id>Q9P121-3</id>
        <label>NTM</label>
    </interactant>
    <organismsDiffer>false</organismsDiffer>
    <experiments>3</experiments>
</comment>
<comment type="interaction">
    <interactant intactId="EBI-740446">
        <id>P32242</id>
    </interactant>
    <interactant intactId="EBI-10277776">
        <id>Q8WWZ8</id>
        <label>OIT3</label>
    </interactant>
    <organismsDiffer>false</organismsDiffer>
    <experiments>3</experiments>
</comment>
<comment type="interaction">
    <interactant intactId="EBI-740446">
        <id>P32242</id>
    </interactant>
    <interactant intactId="EBI-12813389">
        <id>Q8TDS5</id>
        <label>OXER1</label>
    </interactant>
    <organismsDiffer>false</organismsDiffer>
    <experiments>3</experiments>
</comment>
<comment type="interaction">
    <interactant intactId="EBI-740446">
        <id>P32242</id>
    </interactant>
    <interactant intactId="EBI-11956269">
        <id>Q92824-2</id>
        <label>PCSK5</label>
    </interactant>
    <organismsDiffer>false</organismsDiffer>
    <experiments>5</experiments>
</comment>
<comment type="interaction">
    <interactant intactId="EBI-740446">
        <id>P32242</id>
    </interactant>
    <interactant intactId="EBI-726466">
        <id>O15496</id>
        <label>PLA2G10</label>
    </interactant>
    <organismsDiffer>false</organismsDiffer>
    <experiments>3</experiments>
</comment>
<comment type="interaction">
    <interactant intactId="EBI-740446">
        <id>P32242</id>
    </interactant>
    <interactant intactId="EBI-949255">
        <id>Q58EX7</id>
        <label>PLEKHG4</label>
    </interactant>
    <organismsDiffer>false</organismsDiffer>
    <experiments>3</experiments>
</comment>
<comment type="interaction">
    <interactant intactId="EBI-740446">
        <id>P32242</id>
    </interactant>
    <interactant intactId="EBI-3937430">
        <id>Q9NRY7</id>
        <label>PLSCR2</label>
    </interactant>
    <organismsDiffer>false</organismsDiffer>
    <experiments>3</experiments>
</comment>
<comment type="interaction">
    <interactant intactId="EBI-740446">
        <id>P32242</id>
    </interactant>
    <interactant intactId="EBI-943588">
        <id>Q16633</id>
        <label>POU2AF1</label>
    </interactant>
    <organismsDiffer>false</organismsDiffer>
    <experiments>3</experiments>
</comment>
<comment type="interaction">
    <interactant intactId="EBI-740446">
        <id>P32242</id>
    </interactant>
    <interactant intactId="EBI-740924">
        <id>Q9NZ81</id>
        <label>PRR13</label>
    </interactant>
    <organismsDiffer>false</organismsDiffer>
    <experiments>3</experiments>
</comment>
<comment type="interaction">
    <interactant intactId="EBI-740446">
        <id>P32242</id>
    </interactant>
    <interactant intactId="EBI-740322">
        <id>Q93062</id>
        <label>RBPMS</label>
    </interactant>
    <organismsDiffer>false</organismsDiffer>
    <experiments>4</experiments>
</comment>
<comment type="interaction">
    <interactant intactId="EBI-740446">
        <id>P32242</id>
    </interactant>
    <interactant intactId="EBI-3918154">
        <id>Q9UGC6</id>
        <label>RGS17</label>
    </interactant>
    <organismsDiffer>false</organismsDiffer>
    <experiments>6</experiments>
</comment>
<comment type="interaction">
    <interactant intactId="EBI-740446">
        <id>P32242</id>
    </interactant>
    <interactant intactId="EBI-874907">
        <id>P49795</id>
        <label>RGS19</label>
    </interactant>
    <organismsDiffer>false</organismsDiffer>
    <experiments>3</experiments>
</comment>
<comment type="interaction">
    <interactant intactId="EBI-740446">
        <id>P32242</id>
    </interactant>
    <interactant intactId="EBI-1052678">
        <id>O76081</id>
        <label>RGS20</label>
    </interactant>
    <organismsDiffer>false</organismsDiffer>
    <experiments>5</experiments>
</comment>
<comment type="interaction">
    <interactant intactId="EBI-740446">
        <id>P32242</id>
    </interactant>
    <interactant intactId="EBI-10178530">
        <id>O76081-6</id>
        <label>RGS20</label>
    </interactant>
    <organismsDiffer>false</organismsDiffer>
    <experiments>3</experiments>
</comment>
<comment type="interaction">
    <interactant intactId="EBI-740446">
        <id>P32242</id>
    </interactant>
    <interactant intactId="EBI-5240240">
        <id>Q9BZR6</id>
        <label>RTN4R</label>
    </interactant>
    <organismsDiffer>false</organismsDiffer>
    <experiments>3</experiments>
</comment>
<comment type="interaction">
    <interactant intactId="EBI-740446">
        <id>P32242</id>
    </interactant>
    <interactant intactId="EBI-12806032">
        <id>Q16348</id>
        <label>SLC15A2</label>
    </interactant>
    <organismsDiffer>false</organismsDiffer>
    <experiments>3</experiments>
</comment>
<comment type="interaction">
    <interactant intactId="EBI-740446">
        <id>P32242</id>
    </interactant>
    <interactant intactId="EBI-355653">
        <id>Q92922</id>
        <label>SMARCC1</label>
    </interactant>
    <organismsDiffer>false</organismsDiffer>
    <experiments>3</experiments>
</comment>
<comment type="interaction">
    <interactant intactId="EBI-740446">
        <id>P32242</id>
    </interactant>
    <interactant intactId="EBI-743976">
        <id>Q96LM6</id>
        <label>SPMIP9</label>
    </interactant>
    <organismsDiffer>false</organismsDiffer>
    <experiments>3</experiments>
</comment>
<comment type="interaction">
    <interactant intactId="EBI-740446">
        <id>P32242</id>
    </interactant>
    <interactant intactId="EBI-3866665">
        <id>O43609</id>
        <label>SPRY1</label>
    </interactant>
    <organismsDiffer>false</organismsDiffer>
    <experiments>4</experiments>
</comment>
<comment type="interaction">
    <interactant intactId="EBI-740446">
        <id>P32242</id>
    </interactant>
    <interactant intactId="EBI-742487">
        <id>O43597</id>
        <label>SPRY2</label>
    </interactant>
    <organismsDiffer>false</organismsDiffer>
    <experiments>4</experiments>
</comment>
<comment type="interaction">
    <interactant intactId="EBI-740446">
        <id>P32242</id>
    </interactant>
    <interactant intactId="EBI-354861">
        <id>Q9C004</id>
        <label>SPRY4</label>
    </interactant>
    <organismsDiffer>false</organismsDiffer>
    <experiments>3</experiments>
</comment>
<comment type="interaction">
    <interactant intactId="EBI-740446">
        <id>P32242</id>
    </interactant>
    <interactant intactId="EBI-12408727">
        <id>Q5W111-2</id>
        <label>SPRYD7</label>
    </interactant>
    <organismsDiffer>false</organismsDiffer>
    <experiments>3</experiments>
</comment>
<comment type="interaction">
    <interactant intactId="EBI-740446">
        <id>P32242</id>
    </interactant>
    <interactant intactId="EBI-372899">
        <id>Q13148</id>
        <label>TARDBP</label>
    </interactant>
    <organismsDiffer>false</organismsDiffer>
    <experiments>6</experiments>
</comment>
<comment type="interaction">
    <interactant intactId="EBI-740446">
        <id>P32242</id>
    </interactant>
    <interactant intactId="EBI-949753">
        <id>Q63HR2</id>
        <label>TNS2</label>
    </interactant>
    <organismsDiffer>false</organismsDiffer>
    <experiments>5</experiments>
</comment>
<comment type="interaction">
    <interactant intactId="EBI-740446">
        <id>P32242</id>
    </interactant>
    <interactant intactId="EBI-5235829">
        <id>Q8IWZ5</id>
        <label>TRIM42</label>
    </interactant>
    <organismsDiffer>false</organismsDiffer>
    <experiments>3</experiments>
</comment>
<comment type="interaction">
    <interactant intactId="EBI-740446">
        <id>P32242</id>
    </interactant>
    <interactant intactId="EBI-742327">
        <id>Q15654</id>
        <label>TRIP6</label>
    </interactant>
    <organismsDiffer>false</organismsDiffer>
    <experiments>3</experiments>
</comment>
<comment type="interaction">
    <interactant intactId="EBI-740446">
        <id>P32242</id>
    </interactant>
    <interactant intactId="EBI-8652667">
        <id>O14817</id>
        <label>TSPAN4</label>
    </interactant>
    <organismsDiffer>false</organismsDiffer>
    <experiments>3</experiments>
</comment>
<comment type="interaction">
    <interactant intactId="EBI-740446">
        <id>P32242</id>
    </interactant>
    <interactant intactId="EBI-2514383">
        <id>Q5T6F2</id>
        <label>UBAP2</label>
    </interactant>
    <organismsDiffer>false</organismsDiffer>
    <experiments>3</experiments>
</comment>
<comment type="interaction">
    <interactant intactId="EBI-740446">
        <id>P32242</id>
    </interactant>
    <interactant intactId="EBI-11975223">
        <id>Q70EL1-9</id>
        <label>USP54</label>
    </interactant>
    <organismsDiffer>false</organismsDiffer>
    <experiments>3</experiments>
</comment>
<comment type="interaction">
    <interactant intactId="EBI-740446">
        <id>P32242</id>
    </interactant>
    <interactant intactId="EBI-11957238">
        <id>Q2TAL6</id>
        <label>VWC2</label>
    </interactant>
    <organismsDiffer>false</organismsDiffer>
    <experiments>3</experiments>
</comment>
<comment type="interaction">
    <interactant intactId="EBI-740446">
        <id>P32242</id>
    </interactant>
    <interactant intactId="EBI-11747707">
        <id>B2RUY7</id>
        <label>VWC2L</label>
    </interactant>
    <organismsDiffer>false</organismsDiffer>
    <experiments>5</experiments>
</comment>
<comment type="interaction">
    <interactant intactId="EBI-740446">
        <id>P32242</id>
    </interactant>
    <interactant intactId="EBI-12040603">
        <id>Q9NZC7-5</id>
        <label>WWOX</label>
    </interactant>
    <organismsDiffer>false</organismsDiffer>
    <experiments>3</experiments>
</comment>
<comment type="interaction">
    <interactant intactId="EBI-740446">
        <id>P32242</id>
    </interactant>
    <interactant intactId="EBI-12287587">
        <id>B2RXF5</id>
        <label>ZBTB42</label>
    </interactant>
    <organismsDiffer>false</organismsDiffer>
    <experiments>3</experiments>
</comment>
<comment type="interaction">
    <interactant intactId="EBI-740446">
        <id>P32242</id>
    </interactant>
    <interactant intactId="EBI-373456">
        <id>Q9Y3S2</id>
        <label>ZNF330</label>
    </interactant>
    <organismsDiffer>false</organismsDiffer>
    <experiments>3</experiments>
</comment>
<comment type="subcellular location">
    <subcellularLocation>
        <location evidence="4">Nucleus</location>
    </subcellularLocation>
</comment>
<comment type="tissue specificity">
    <text evidence="3">Expressed in brain. Detected in the anterior part of the neural fetal retina (at protein level).</text>
</comment>
<comment type="developmental stage">
    <text>Embryo.</text>
</comment>
<comment type="similarity">
    <text evidence="4">Belongs to the paired homeobox family. Bicoid subfamily.</text>
</comment>
<accession>P32242</accession>
<accession>A6NHA2</accession>
<accession>B3KTJ4</accession>
<accession>Q53TG6</accession>
<sequence>MMSYLKQPPYGMNGLGLAGPAMDLLHPSVGYPATPRKQRRERTTFTRSQLDVLEALFAKTRYPDIFMREEVALKINLPESRVQVWFKNRRAKCRQQQQSGSGTKSRPAKKKSSPVRESSGSESSGQFTPPAVSSSASSSSSASSSSANPAAAAAAGLGGNPVAAASSLSTPAASSIWSPASISPGSAPASVSVPEPLAAPSNTSCMQRSVAAGAATAAASYPMSYGQGGSYGQGYPTPSSSYFGGVDCSSYLAPMHSHHHPHQLSPMAPSSMAGHHHHHPHAHHPLSQSSGHHHHHHHHHHQGYGGSGLAFNSADCLDYKEPGAAAASSAWKLNFNSPDCLDYKDQASWRFQVL</sequence>
<gene>
    <name type="primary">OTX1</name>
</gene>
<reference key="1">
    <citation type="journal article" date="1993" name="EMBO J.">
        <title>A vertebrate gene related to orthodenticle contains a homeodomain of the bicoid class and demarcates anterior neuroectoderm in the gastrulating mouse embryo.</title>
        <authorList>
            <person name="Simeone A."/>
            <person name="Acampora D."/>
            <person name="Mallamaci A."/>
            <person name="Stornaiuolo A."/>
            <person name="D'Apice M.R."/>
            <person name="Nigro V."/>
            <person name="Boncinelli E."/>
        </authorList>
    </citation>
    <scope>NUCLEOTIDE SEQUENCE [MRNA]</scope>
</reference>
<reference key="2">
    <citation type="journal article" date="2004" name="Nat. Genet.">
        <title>Complete sequencing and characterization of 21,243 full-length human cDNAs.</title>
        <authorList>
            <person name="Ota T."/>
            <person name="Suzuki Y."/>
            <person name="Nishikawa T."/>
            <person name="Otsuki T."/>
            <person name="Sugiyama T."/>
            <person name="Irie R."/>
            <person name="Wakamatsu A."/>
            <person name="Hayashi K."/>
            <person name="Sato H."/>
            <person name="Nagai K."/>
            <person name="Kimura K."/>
            <person name="Makita H."/>
            <person name="Sekine M."/>
            <person name="Obayashi M."/>
            <person name="Nishi T."/>
            <person name="Shibahara T."/>
            <person name="Tanaka T."/>
            <person name="Ishii S."/>
            <person name="Yamamoto J."/>
            <person name="Saito K."/>
            <person name="Kawai Y."/>
            <person name="Isono Y."/>
            <person name="Nakamura Y."/>
            <person name="Nagahari K."/>
            <person name="Murakami K."/>
            <person name="Yasuda T."/>
            <person name="Iwayanagi T."/>
            <person name="Wagatsuma M."/>
            <person name="Shiratori A."/>
            <person name="Sudo H."/>
            <person name="Hosoiri T."/>
            <person name="Kaku Y."/>
            <person name="Kodaira H."/>
            <person name="Kondo H."/>
            <person name="Sugawara M."/>
            <person name="Takahashi M."/>
            <person name="Kanda K."/>
            <person name="Yokoi T."/>
            <person name="Furuya T."/>
            <person name="Kikkawa E."/>
            <person name="Omura Y."/>
            <person name="Abe K."/>
            <person name="Kamihara K."/>
            <person name="Katsuta N."/>
            <person name="Sato K."/>
            <person name="Tanikawa M."/>
            <person name="Yamazaki M."/>
            <person name="Ninomiya K."/>
            <person name="Ishibashi T."/>
            <person name="Yamashita H."/>
            <person name="Murakawa K."/>
            <person name="Fujimori K."/>
            <person name="Tanai H."/>
            <person name="Kimata M."/>
            <person name="Watanabe M."/>
            <person name="Hiraoka S."/>
            <person name="Chiba Y."/>
            <person name="Ishida S."/>
            <person name="Ono Y."/>
            <person name="Takiguchi S."/>
            <person name="Watanabe S."/>
            <person name="Yosida M."/>
            <person name="Hotuta T."/>
            <person name="Kusano J."/>
            <person name="Kanehori K."/>
            <person name="Takahashi-Fujii A."/>
            <person name="Hara H."/>
            <person name="Tanase T.-O."/>
            <person name="Nomura Y."/>
            <person name="Togiya S."/>
            <person name="Komai F."/>
            <person name="Hara R."/>
            <person name="Takeuchi K."/>
            <person name="Arita M."/>
            <person name="Imose N."/>
            <person name="Musashino K."/>
            <person name="Yuuki H."/>
            <person name="Oshima A."/>
            <person name="Sasaki N."/>
            <person name="Aotsuka S."/>
            <person name="Yoshikawa Y."/>
            <person name="Matsunawa H."/>
            <person name="Ichihara T."/>
            <person name="Shiohata N."/>
            <person name="Sano S."/>
            <person name="Moriya S."/>
            <person name="Momiyama H."/>
            <person name="Satoh N."/>
            <person name="Takami S."/>
            <person name="Terashima Y."/>
            <person name="Suzuki O."/>
            <person name="Nakagawa S."/>
            <person name="Senoh A."/>
            <person name="Mizoguchi H."/>
            <person name="Goto Y."/>
            <person name="Shimizu F."/>
            <person name="Wakebe H."/>
            <person name="Hishigaki H."/>
            <person name="Watanabe T."/>
            <person name="Sugiyama A."/>
            <person name="Takemoto M."/>
            <person name="Kawakami B."/>
            <person name="Yamazaki M."/>
            <person name="Watanabe K."/>
            <person name="Kumagai A."/>
            <person name="Itakura S."/>
            <person name="Fukuzumi Y."/>
            <person name="Fujimori Y."/>
            <person name="Komiyama M."/>
            <person name="Tashiro H."/>
            <person name="Tanigami A."/>
            <person name="Fujiwara T."/>
            <person name="Ono T."/>
            <person name="Yamada K."/>
            <person name="Fujii Y."/>
            <person name="Ozaki K."/>
            <person name="Hirao M."/>
            <person name="Ohmori Y."/>
            <person name="Kawabata A."/>
            <person name="Hikiji T."/>
            <person name="Kobatake N."/>
            <person name="Inagaki H."/>
            <person name="Ikema Y."/>
            <person name="Okamoto S."/>
            <person name="Okitani R."/>
            <person name="Kawakami T."/>
            <person name="Noguchi S."/>
            <person name="Itoh T."/>
            <person name="Shigeta K."/>
            <person name="Senba T."/>
            <person name="Matsumura K."/>
            <person name="Nakajima Y."/>
            <person name="Mizuno T."/>
            <person name="Morinaga M."/>
            <person name="Sasaki M."/>
            <person name="Togashi T."/>
            <person name="Oyama M."/>
            <person name="Hata H."/>
            <person name="Watanabe M."/>
            <person name="Komatsu T."/>
            <person name="Mizushima-Sugano J."/>
            <person name="Satoh T."/>
            <person name="Shirai Y."/>
            <person name="Takahashi Y."/>
            <person name="Nakagawa K."/>
            <person name="Okumura K."/>
            <person name="Nagase T."/>
            <person name="Nomura N."/>
            <person name="Kikuchi H."/>
            <person name="Masuho Y."/>
            <person name="Yamashita R."/>
            <person name="Nakai K."/>
            <person name="Yada T."/>
            <person name="Nakamura Y."/>
            <person name="Ohara O."/>
            <person name="Isogai T."/>
            <person name="Sugano S."/>
        </authorList>
    </citation>
    <scope>NUCLEOTIDE SEQUENCE [LARGE SCALE MRNA]</scope>
    <source>
        <tissue>Brain</tissue>
    </source>
</reference>
<reference key="3">
    <citation type="journal article" date="2005" name="Nature">
        <title>Generation and annotation of the DNA sequences of human chromosomes 2 and 4.</title>
        <authorList>
            <person name="Hillier L.W."/>
            <person name="Graves T.A."/>
            <person name="Fulton R.S."/>
            <person name="Fulton L.A."/>
            <person name="Pepin K.H."/>
            <person name="Minx P."/>
            <person name="Wagner-McPherson C."/>
            <person name="Layman D."/>
            <person name="Wylie K."/>
            <person name="Sekhon M."/>
            <person name="Becker M.C."/>
            <person name="Fewell G.A."/>
            <person name="Delehaunty K.D."/>
            <person name="Miner T.L."/>
            <person name="Nash W.E."/>
            <person name="Kremitzki C."/>
            <person name="Oddy L."/>
            <person name="Du H."/>
            <person name="Sun H."/>
            <person name="Bradshaw-Cordum H."/>
            <person name="Ali J."/>
            <person name="Carter J."/>
            <person name="Cordes M."/>
            <person name="Harris A."/>
            <person name="Isak A."/>
            <person name="van Brunt A."/>
            <person name="Nguyen C."/>
            <person name="Du F."/>
            <person name="Courtney L."/>
            <person name="Kalicki J."/>
            <person name="Ozersky P."/>
            <person name="Abbott S."/>
            <person name="Armstrong J."/>
            <person name="Belter E.A."/>
            <person name="Caruso L."/>
            <person name="Cedroni M."/>
            <person name="Cotton M."/>
            <person name="Davidson T."/>
            <person name="Desai A."/>
            <person name="Elliott G."/>
            <person name="Erb T."/>
            <person name="Fronick C."/>
            <person name="Gaige T."/>
            <person name="Haakenson W."/>
            <person name="Haglund K."/>
            <person name="Holmes A."/>
            <person name="Harkins R."/>
            <person name="Kim K."/>
            <person name="Kruchowski S.S."/>
            <person name="Strong C.M."/>
            <person name="Grewal N."/>
            <person name="Goyea E."/>
            <person name="Hou S."/>
            <person name="Levy A."/>
            <person name="Martinka S."/>
            <person name="Mead K."/>
            <person name="McLellan M.D."/>
            <person name="Meyer R."/>
            <person name="Randall-Maher J."/>
            <person name="Tomlinson C."/>
            <person name="Dauphin-Kohlberg S."/>
            <person name="Kozlowicz-Reilly A."/>
            <person name="Shah N."/>
            <person name="Swearengen-Shahid S."/>
            <person name="Snider J."/>
            <person name="Strong J.T."/>
            <person name="Thompson J."/>
            <person name="Yoakum M."/>
            <person name="Leonard S."/>
            <person name="Pearman C."/>
            <person name="Trani L."/>
            <person name="Radionenko M."/>
            <person name="Waligorski J.E."/>
            <person name="Wang C."/>
            <person name="Rock S.M."/>
            <person name="Tin-Wollam A.-M."/>
            <person name="Maupin R."/>
            <person name="Latreille P."/>
            <person name="Wendl M.C."/>
            <person name="Yang S.-P."/>
            <person name="Pohl C."/>
            <person name="Wallis J.W."/>
            <person name="Spieth J."/>
            <person name="Bieri T.A."/>
            <person name="Berkowicz N."/>
            <person name="Nelson J.O."/>
            <person name="Osborne J."/>
            <person name="Ding L."/>
            <person name="Meyer R."/>
            <person name="Sabo A."/>
            <person name="Shotland Y."/>
            <person name="Sinha P."/>
            <person name="Wohldmann P.E."/>
            <person name="Cook L.L."/>
            <person name="Hickenbotham M.T."/>
            <person name="Eldred J."/>
            <person name="Williams D."/>
            <person name="Jones T.A."/>
            <person name="She X."/>
            <person name="Ciccarelli F.D."/>
            <person name="Izaurralde E."/>
            <person name="Taylor J."/>
            <person name="Schmutz J."/>
            <person name="Myers R.M."/>
            <person name="Cox D.R."/>
            <person name="Huang X."/>
            <person name="McPherson J.D."/>
            <person name="Mardis E.R."/>
            <person name="Clifton S.W."/>
            <person name="Warren W.C."/>
            <person name="Chinwalla A.T."/>
            <person name="Eddy S.R."/>
            <person name="Marra M.A."/>
            <person name="Ovcharenko I."/>
            <person name="Furey T.S."/>
            <person name="Miller W."/>
            <person name="Eichler E.E."/>
            <person name="Bork P."/>
            <person name="Suyama M."/>
            <person name="Torrents D."/>
            <person name="Waterston R.H."/>
            <person name="Wilson R.K."/>
        </authorList>
    </citation>
    <scope>NUCLEOTIDE SEQUENCE [LARGE SCALE GENOMIC DNA]</scope>
</reference>
<reference key="4">
    <citation type="submission" date="2005-09" db="EMBL/GenBank/DDBJ databases">
        <authorList>
            <person name="Mural R.J."/>
            <person name="Istrail S."/>
            <person name="Sutton G."/>
            <person name="Florea L."/>
            <person name="Halpern A.L."/>
            <person name="Mobarry C.M."/>
            <person name="Lippert R."/>
            <person name="Walenz B."/>
            <person name="Shatkay H."/>
            <person name="Dew I."/>
            <person name="Miller J.R."/>
            <person name="Flanigan M.J."/>
            <person name="Edwards N.J."/>
            <person name="Bolanos R."/>
            <person name="Fasulo D."/>
            <person name="Halldorsson B.V."/>
            <person name="Hannenhalli S."/>
            <person name="Turner R."/>
            <person name="Yooseph S."/>
            <person name="Lu F."/>
            <person name="Nusskern D.R."/>
            <person name="Shue B.C."/>
            <person name="Zheng X.H."/>
            <person name="Zhong F."/>
            <person name="Delcher A.L."/>
            <person name="Huson D.H."/>
            <person name="Kravitz S.A."/>
            <person name="Mouchard L."/>
            <person name="Reinert K."/>
            <person name="Remington K.A."/>
            <person name="Clark A.G."/>
            <person name="Waterman M.S."/>
            <person name="Eichler E.E."/>
            <person name="Adams M.D."/>
            <person name="Hunkapiller M.W."/>
            <person name="Myers E.W."/>
            <person name="Venter J.C."/>
        </authorList>
    </citation>
    <scope>NUCLEOTIDE SEQUENCE [LARGE SCALE GENOMIC DNA]</scope>
</reference>
<reference key="5">
    <citation type="journal article" date="2004" name="Genome Res.">
        <title>The status, quality, and expansion of the NIH full-length cDNA project: the Mammalian Gene Collection (MGC).</title>
        <authorList>
            <consortium name="The MGC Project Team"/>
        </authorList>
    </citation>
    <scope>NUCLEOTIDE SEQUENCE [LARGE SCALE MRNA]</scope>
    <source>
        <tissue>Eye</tissue>
    </source>
</reference>
<reference key="6">
    <citation type="journal article" date="2009" name="Int. J. Dev. Neurosci.">
        <title>Expression of the homeobox genes PAX6, OTX2, and OTX1 in the early human fetal retina.</title>
        <authorList>
            <person name="Larsen K.B."/>
            <person name="Lutterodt M."/>
            <person name="Rath M.F."/>
            <person name="Moeller M."/>
        </authorList>
    </citation>
    <scope>TISSUE SPECIFICITY</scope>
</reference>
<reference key="7">
    <citation type="journal article" date="2015" name="Cell Rep.">
        <title>SUMO-2 orchestrates chromatin modifiers in response to DNA damage.</title>
        <authorList>
            <person name="Hendriks I.A."/>
            <person name="Treffers L.W."/>
            <person name="Verlaan-de Vries M."/>
            <person name="Olsen J.V."/>
            <person name="Vertegaal A.C."/>
        </authorList>
    </citation>
    <scope>SUMOYLATION [LARGE SCALE ANALYSIS] AT LYS-344</scope>
    <scope>IDENTIFICATION BY MASS SPECTROMETRY [LARGE SCALE ANALYSIS]</scope>
</reference>
<reference key="8">
    <citation type="journal article" date="2017" name="Nat. Struct. Mol. Biol.">
        <title>Site-specific mapping of the human SUMO proteome reveals co-modification with phosphorylation.</title>
        <authorList>
            <person name="Hendriks I.A."/>
            <person name="Lyon D."/>
            <person name="Young C."/>
            <person name="Jensen L.J."/>
            <person name="Vertegaal A.C."/>
            <person name="Nielsen M.L."/>
        </authorList>
    </citation>
    <scope>SUMOYLATION [LARGE SCALE ANALYSIS] AT LYS-344</scope>
    <scope>IDENTIFICATION BY MASS SPECTROMETRY [LARGE SCALE ANALYSIS]</scope>
</reference>
<protein>
    <recommendedName>
        <fullName>Homeobox protein OTX1</fullName>
    </recommendedName>
    <alternativeName>
        <fullName>Orthodenticle homolog 1</fullName>
    </alternativeName>
</protein>
<evidence type="ECO:0000255" key="1">
    <source>
        <dbReference type="PROSITE-ProRule" id="PRU00108"/>
    </source>
</evidence>
<evidence type="ECO:0000256" key="2">
    <source>
        <dbReference type="SAM" id="MobiDB-lite"/>
    </source>
</evidence>
<evidence type="ECO:0000269" key="3">
    <source>
    </source>
</evidence>
<evidence type="ECO:0000305" key="4"/>
<evidence type="ECO:0007744" key="5">
    <source>
    </source>
</evidence>
<evidence type="ECO:0007744" key="6">
    <source>
    </source>
</evidence>
<proteinExistence type="evidence at protein level"/>
<feature type="chain" id="PRO_0000049207" description="Homeobox protein OTX1">
    <location>
        <begin position="1"/>
        <end position="354"/>
    </location>
</feature>
<feature type="DNA-binding region" description="Homeobox" evidence="1">
    <location>
        <begin position="38"/>
        <end position="97"/>
    </location>
</feature>
<feature type="region of interest" description="Disordered" evidence="2">
    <location>
        <begin position="91"/>
        <end position="146"/>
    </location>
</feature>
<feature type="region of interest" description="Disordered" evidence="2">
    <location>
        <begin position="257"/>
        <end position="305"/>
    </location>
</feature>
<feature type="compositionally biased region" description="Polar residues" evidence="2">
    <location>
        <begin position="94"/>
        <end position="104"/>
    </location>
</feature>
<feature type="compositionally biased region" description="Low complexity" evidence="2">
    <location>
        <begin position="117"/>
        <end position="146"/>
    </location>
</feature>
<feature type="compositionally biased region" description="Basic residues" evidence="2">
    <location>
        <begin position="274"/>
        <end position="284"/>
    </location>
</feature>
<feature type="compositionally biased region" description="Basic residues" evidence="2">
    <location>
        <begin position="291"/>
        <end position="302"/>
    </location>
</feature>
<feature type="cross-link" description="Glycyl lysine isopeptide (Lys-Gly) (interchain with G-Cter in SUMO2)" evidence="5 6">
    <location>
        <position position="344"/>
    </location>
</feature>
<keyword id="KW-0217">Developmental protein</keyword>
<keyword id="KW-0238">DNA-binding</keyword>
<keyword id="KW-0371">Homeobox</keyword>
<keyword id="KW-1017">Isopeptide bond</keyword>
<keyword id="KW-0539">Nucleus</keyword>
<keyword id="KW-1267">Proteomics identification</keyword>
<keyword id="KW-1185">Reference proteome</keyword>
<keyword id="KW-0832">Ubl conjugation</keyword>
<dbReference type="EMBL" id="AK095680">
    <property type="protein sequence ID" value="BAG53106.1"/>
    <property type="molecule type" value="mRNA"/>
</dbReference>
<dbReference type="EMBL" id="AC009501">
    <property type="protein sequence ID" value="AAY24357.1"/>
    <property type="molecule type" value="Genomic_DNA"/>
</dbReference>
<dbReference type="EMBL" id="CH471053">
    <property type="protein sequence ID" value="EAW99967.1"/>
    <property type="molecule type" value="Genomic_DNA"/>
</dbReference>
<dbReference type="EMBL" id="BC007621">
    <property type="protein sequence ID" value="AAH07621.1"/>
    <property type="molecule type" value="mRNA"/>
</dbReference>
<dbReference type="CCDS" id="CCDS1873.1"/>
<dbReference type="PIR" id="S39406">
    <property type="entry name" value="S39406"/>
</dbReference>
<dbReference type="RefSeq" id="NP_001186699.1">
    <property type="nucleotide sequence ID" value="NM_001199770.2"/>
</dbReference>
<dbReference type="RefSeq" id="NP_055377.1">
    <property type="nucleotide sequence ID" value="NM_014562.4"/>
</dbReference>
<dbReference type="BMRB" id="P32242"/>
<dbReference type="SMR" id="P32242"/>
<dbReference type="BioGRID" id="111053">
    <property type="interactions" value="153"/>
</dbReference>
<dbReference type="FunCoup" id="P32242">
    <property type="interactions" value="1101"/>
</dbReference>
<dbReference type="IntAct" id="P32242">
    <property type="interactions" value="140"/>
</dbReference>
<dbReference type="MINT" id="P32242"/>
<dbReference type="STRING" id="9606.ENSP00000355631"/>
<dbReference type="GlyGen" id="P32242">
    <property type="glycosylation" value="3 sites, 1 O-linked glycan (1 site)"/>
</dbReference>
<dbReference type="iPTMnet" id="P32242"/>
<dbReference type="PhosphoSitePlus" id="P32242"/>
<dbReference type="BioMuta" id="OTX1"/>
<dbReference type="DMDM" id="417425"/>
<dbReference type="jPOST" id="P32242"/>
<dbReference type="MassIVE" id="P32242"/>
<dbReference type="PaxDb" id="9606-ENSP00000282549"/>
<dbReference type="PeptideAtlas" id="P32242"/>
<dbReference type="ProteomicsDB" id="54850"/>
<dbReference type="Antibodypedia" id="3233">
    <property type="antibodies" value="272 antibodies from 29 providers"/>
</dbReference>
<dbReference type="DNASU" id="5013"/>
<dbReference type="Ensembl" id="ENST00000282549.7">
    <property type="protein sequence ID" value="ENSP00000282549.2"/>
    <property type="gene ID" value="ENSG00000115507.10"/>
</dbReference>
<dbReference type="Ensembl" id="ENST00000366671.7">
    <property type="protein sequence ID" value="ENSP00000355631.3"/>
    <property type="gene ID" value="ENSG00000115507.10"/>
</dbReference>
<dbReference type="GeneID" id="5013"/>
<dbReference type="KEGG" id="hsa:5013"/>
<dbReference type="MANE-Select" id="ENST00000282549.7">
    <property type="protein sequence ID" value="ENSP00000282549.2"/>
    <property type="RefSeq nucleotide sequence ID" value="NM_014562.4"/>
    <property type="RefSeq protein sequence ID" value="NP_055377.1"/>
</dbReference>
<dbReference type="UCSC" id="uc002scd.4">
    <property type="organism name" value="human"/>
</dbReference>
<dbReference type="AGR" id="HGNC:8521"/>
<dbReference type="CTD" id="5013"/>
<dbReference type="DisGeNET" id="5013"/>
<dbReference type="GeneCards" id="OTX1"/>
<dbReference type="HGNC" id="HGNC:8521">
    <property type="gene designation" value="OTX1"/>
</dbReference>
<dbReference type="HPA" id="ENSG00000115507">
    <property type="expression patterns" value="Group enriched (salivary gland, skin)"/>
</dbReference>
<dbReference type="MalaCards" id="OTX1"/>
<dbReference type="MIM" id="600036">
    <property type="type" value="gene"/>
</dbReference>
<dbReference type="neXtProt" id="NX_P32242"/>
<dbReference type="OpenTargets" id="ENSG00000115507"/>
<dbReference type="PharmGKB" id="PA32848"/>
<dbReference type="VEuPathDB" id="HostDB:ENSG00000115507"/>
<dbReference type="eggNOG" id="KOG2251">
    <property type="taxonomic scope" value="Eukaryota"/>
</dbReference>
<dbReference type="GeneTree" id="ENSGT00940000161234"/>
<dbReference type="HOGENOM" id="CLU_064370_0_0_1"/>
<dbReference type="InParanoid" id="P32242"/>
<dbReference type="OMA" id="ASYSMSY"/>
<dbReference type="OrthoDB" id="6159439at2759"/>
<dbReference type="PAN-GO" id="P32242">
    <property type="GO annotations" value="4 GO annotations based on evolutionary models"/>
</dbReference>
<dbReference type="PhylomeDB" id="P32242"/>
<dbReference type="TreeFam" id="TF351179"/>
<dbReference type="PathwayCommons" id="P32242"/>
<dbReference type="SignaLink" id="P32242"/>
<dbReference type="SIGNOR" id="P32242"/>
<dbReference type="BioGRID-ORCS" id="5013">
    <property type="hits" value="45 hits in 1182 CRISPR screens"/>
</dbReference>
<dbReference type="ChiTaRS" id="OTX1">
    <property type="organism name" value="human"/>
</dbReference>
<dbReference type="GeneWiki" id="OTX1"/>
<dbReference type="GenomeRNAi" id="5013"/>
<dbReference type="Pharos" id="P32242">
    <property type="development level" value="Tbio"/>
</dbReference>
<dbReference type="PRO" id="PR:P32242"/>
<dbReference type="Proteomes" id="UP000005640">
    <property type="component" value="Chromosome 2"/>
</dbReference>
<dbReference type="RNAct" id="P32242">
    <property type="molecule type" value="protein"/>
</dbReference>
<dbReference type="Bgee" id="ENSG00000115507">
    <property type="expression patterns" value="Expressed in olfactory segment of nasal mucosa and 62 other cell types or tissues"/>
</dbReference>
<dbReference type="ExpressionAtlas" id="P32242">
    <property type="expression patterns" value="baseline and differential"/>
</dbReference>
<dbReference type="GO" id="GO:0000785">
    <property type="term" value="C:chromatin"/>
    <property type="evidence" value="ECO:0000247"/>
    <property type="project" value="NTNU_SB"/>
</dbReference>
<dbReference type="GO" id="GO:0005634">
    <property type="term" value="C:nucleus"/>
    <property type="evidence" value="ECO:0000318"/>
    <property type="project" value="GO_Central"/>
</dbReference>
<dbReference type="GO" id="GO:0001228">
    <property type="term" value="F:DNA-binding transcription activator activity, RNA polymerase II-specific"/>
    <property type="evidence" value="ECO:0000314"/>
    <property type="project" value="NTNU_SB"/>
</dbReference>
<dbReference type="GO" id="GO:0000981">
    <property type="term" value="F:DNA-binding transcription factor activity, RNA polymerase II-specific"/>
    <property type="evidence" value="ECO:0000247"/>
    <property type="project" value="NTNU_SB"/>
</dbReference>
<dbReference type="GO" id="GO:0000978">
    <property type="term" value="F:RNA polymerase II cis-regulatory region sequence-specific DNA binding"/>
    <property type="evidence" value="ECO:0000314"/>
    <property type="project" value="NTNU_SB"/>
</dbReference>
<dbReference type="GO" id="GO:1990837">
    <property type="term" value="F:sequence-specific double-stranded DNA binding"/>
    <property type="evidence" value="ECO:0000314"/>
    <property type="project" value="ARUK-UCL"/>
</dbReference>
<dbReference type="GO" id="GO:0009952">
    <property type="term" value="P:anterior/posterior pattern specification"/>
    <property type="evidence" value="ECO:0007669"/>
    <property type="project" value="Ensembl"/>
</dbReference>
<dbReference type="GO" id="GO:0048852">
    <property type="term" value="P:diencephalon morphogenesis"/>
    <property type="evidence" value="ECO:0007669"/>
    <property type="project" value="Ensembl"/>
</dbReference>
<dbReference type="GO" id="GO:0042472">
    <property type="term" value="P:inner ear morphogenesis"/>
    <property type="evidence" value="ECO:0007669"/>
    <property type="project" value="Ensembl"/>
</dbReference>
<dbReference type="GO" id="GO:0022037">
    <property type="term" value="P:metencephalon development"/>
    <property type="evidence" value="ECO:0007669"/>
    <property type="project" value="Ensembl"/>
</dbReference>
<dbReference type="GO" id="GO:0030901">
    <property type="term" value="P:midbrain development"/>
    <property type="evidence" value="ECO:0007669"/>
    <property type="project" value="Ensembl"/>
</dbReference>
<dbReference type="GO" id="GO:0045944">
    <property type="term" value="P:positive regulation of transcription by RNA polymerase II"/>
    <property type="evidence" value="ECO:0000314"/>
    <property type="project" value="NTNU_SB"/>
</dbReference>
<dbReference type="GO" id="GO:0006357">
    <property type="term" value="P:regulation of transcription by RNA polymerase II"/>
    <property type="evidence" value="ECO:0000318"/>
    <property type="project" value="GO_Central"/>
</dbReference>
<dbReference type="CDD" id="cd00086">
    <property type="entry name" value="homeodomain"/>
    <property type="match status" value="1"/>
</dbReference>
<dbReference type="FunFam" id="1.10.10.60:FF:000142">
    <property type="entry name" value="homeobox protein OTX2 isoform X2"/>
    <property type="match status" value="1"/>
</dbReference>
<dbReference type="Gene3D" id="1.10.10.60">
    <property type="entry name" value="Homeodomain-like"/>
    <property type="match status" value="1"/>
</dbReference>
<dbReference type="InterPro" id="IPR001356">
    <property type="entry name" value="HD"/>
</dbReference>
<dbReference type="InterPro" id="IPR017970">
    <property type="entry name" value="Homeobox_CS"/>
</dbReference>
<dbReference type="InterPro" id="IPR009057">
    <property type="entry name" value="Homeodomain-like_sf"/>
</dbReference>
<dbReference type="InterPro" id="IPR003026">
    <property type="entry name" value="Otx1_TF"/>
</dbReference>
<dbReference type="InterPro" id="IPR003025">
    <property type="entry name" value="Otx_TF"/>
</dbReference>
<dbReference type="InterPro" id="IPR013851">
    <property type="entry name" value="Otx_TF_C"/>
</dbReference>
<dbReference type="PANTHER" id="PTHR45793">
    <property type="entry name" value="HOMEOBOX PROTEIN"/>
    <property type="match status" value="1"/>
</dbReference>
<dbReference type="PANTHER" id="PTHR45793:SF9">
    <property type="entry name" value="HOMEOBOX PROTEIN OTX1"/>
    <property type="match status" value="1"/>
</dbReference>
<dbReference type="Pfam" id="PF00046">
    <property type="entry name" value="Homeodomain"/>
    <property type="match status" value="1"/>
</dbReference>
<dbReference type="Pfam" id="PF03529">
    <property type="entry name" value="TF_Otx"/>
    <property type="match status" value="1"/>
</dbReference>
<dbReference type="PRINTS" id="PR01256">
    <property type="entry name" value="OTX1HOMEOBOX"/>
</dbReference>
<dbReference type="PRINTS" id="PR01255">
    <property type="entry name" value="OTXHOMEOBOX"/>
</dbReference>
<dbReference type="SMART" id="SM00389">
    <property type="entry name" value="HOX"/>
    <property type="match status" value="1"/>
</dbReference>
<dbReference type="SUPFAM" id="SSF46689">
    <property type="entry name" value="Homeodomain-like"/>
    <property type="match status" value="1"/>
</dbReference>
<dbReference type="PROSITE" id="PS00027">
    <property type="entry name" value="HOMEOBOX_1"/>
    <property type="match status" value="1"/>
</dbReference>
<dbReference type="PROSITE" id="PS50071">
    <property type="entry name" value="HOMEOBOX_2"/>
    <property type="match status" value="1"/>
</dbReference>
<organism>
    <name type="scientific">Homo sapiens</name>
    <name type="common">Human</name>
    <dbReference type="NCBI Taxonomy" id="9606"/>
    <lineage>
        <taxon>Eukaryota</taxon>
        <taxon>Metazoa</taxon>
        <taxon>Chordata</taxon>
        <taxon>Craniata</taxon>
        <taxon>Vertebrata</taxon>
        <taxon>Euteleostomi</taxon>
        <taxon>Mammalia</taxon>
        <taxon>Eutheria</taxon>
        <taxon>Euarchontoglires</taxon>
        <taxon>Primates</taxon>
        <taxon>Haplorrhini</taxon>
        <taxon>Catarrhini</taxon>
        <taxon>Hominidae</taxon>
        <taxon>Homo</taxon>
    </lineage>
</organism>